<keyword id="KW-0270">Exopolysaccharide synthesis</keyword>
<keyword id="KW-0328">Glycosyltransferase</keyword>
<keyword id="KW-0808">Transferase</keyword>
<keyword id="KW-0843">Virulence</keyword>
<proteinExistence type="inferred from homology"/>
<comment type="function">
    <text>Involved in the biosynthesis of amylovoran which functions as a virulence factor. May be involved in the formation of galactose alpha-1,6 linkages in amylovoran.</text>
</comment>
<comment type="pathway">
    <text>Glycan metabolism; exopolysaccharide biosynthesis.</text>
</comment>
<comment type="similarity">
    <text evidence="1">Belongs to the glycosyltransferase group 1 family. Glycosyltransferase 4 subfamily.</text>
</comment>
<accession>Q46634</accession>
<evidence type="ECO:0000305" key="1"/>
<sequence>MYKLLILIDGISNSGGTDRVASTLSSLLSNHNYDVTLYSLNSGEPYYPVDNKVSIRQPKSSMRLFKLFEFIRYAKNTRPDGVMIISMGKLSVQALLLSKLFRVKSRLICCDHVSIETFSAAVRKLKVFCYGLAEKVVVLTQHDKNYLTSAFSLKNVYVVGNISPFHHENSLNRFDDVFARKQNRVLAVGRLTYQKNFGRLLDIWKNVHKQGWKLLIVGDGEEKAELLEKIKKYHLEESAEIVSPSKKISEYYRSSGVIAMTSRYEGLPMVLIEAKNYALPAIAFDCKTGPAEIIKDDGYVVDYQSNELFTAQLNQLIASEQLRKNFAQAAWQNSADYGPELILKKWNDILN</sequence>
<organism>
    <name type="scientific">Erwinia amylovora</name>
    <name type="common">Fire blight bacteria</name>
    <dbReference type="NCBI Taxonomy" id="552"/>
    <lineage>
        <taxon>Bacteria</taxon>
        <taxon>Pseudomonadati</taxon>
        <taxon>Pseudomonadota</taxon>
        <taxon>Gammaproteobacteria</taxon>
        <taxon>Enterobacterales</taxon>
        <taxon>Erwiniaceae</taxon>
        <taxon>Erwinia</taxon>
    </lineage>
</organism>
<dbReference type="EC" id="2.4.-.-"/>
<dbReference type="EMBL" id="X77921">
    <property type="protein sequence ID" value="CAA54885.2"/>
    <property type="molecule type" value="Genomic_DNA"/>
</dbReference>
<dbReference type="PIR" id="S61897">
    <property type="entry name" value="S52144"/>
</dbReference>
<dbReference type="RefSeq" id="WP_004158320.1">
    <property type="nucleotide sequence ID" value="NZ_RQKG01000006.1"/>
</dbReference>
<dbReference type="SMR" id="Q46634"/>
<dbReference type="CAZy" id="GT4">
    <property type="family name" value="Glycosyltransferase Family 4"/>
</dbReference>
<dbReference type="OMA" id="IGWMHNN"/>
<dbReference type="UniPathway" id="UPA00631"/>
<dbReference type="GO" id="GO:0016757">
    <property type="term" value="F:glycosyltransferase activity"/>
    <property type="evidence" value="ECO:0007669"/>
    <property type="project" value="UniProtKB-KW"/>
</dbReference>
<dbReference type="GO" id="GO:1901135">
    <property type="term" value="P:carbohydrate derivative metabolic process"/>
    <property type="evidence" value="ECO:0007669"/>
    <property type="project" value="UniProtKB-ARBA"/>
</dbReference>
<dbReference type="GO" id="GO:0000271">
    <property type="term" value="P:polysaccharide biosynthetic process"/>
    <property type="evidence" value="ECO:0007669"/>
    <property type="project" value="UniProtKB-KW"/>
</dbReference>
<dbReference type="CDD" id="cd03820">
    <property type="entry name" value="GT4_AmsD-like"/>
    <property type="match status" value="1"/>
</dbReference>
<dbReference type="Gene3D" id="3.40.50.2000">
    <property type="entry name" value="Glycogen Phosphorylase B"/>
    <property type="match status" value="2"/>
</dbReference>
<dbReference type="InterPro" id="IPR001296">
    <property type="entry name" value="Glyco_trans_1"/>
</dbReference>
<dbReference type="PANTHER" id="PTHR12526">
    <property type="entry name" value="GLYCOSYLTRANSFERASE"/>
    <property type="match status" value="1"/>
</dbReference>
<dbReference type="PANTHER" id="PTHR12526:SF630">
    <property type="entry name" value="GLYCOSYLTRANSFERASE"/>
    <property type="match status" value="1"/>
</dbReference>
<dbReference type="Pfam" id="PF00534">
    <property type="entry name" value="Glycos_transf_1"/>
    <property type="match status" value="1"/>
</dbReference>
<dbReference type="SUPFAM" id="SSF53756">
    <property type="entry name" value="UDP-Glycosyltransferase/glycogen phosphorylase"/>
    <property type="match status" value="1"/>
</dbReference>
<feature type="chain" id="PRO_0000080291" description="Amylovoran biosynthesis glycosyltransferase AmsD">
    <location>
        <begin position="1"/>
        <end position="351"/>
    </location>
</feature>
<reference key="1">
    <citation type="journal article" date="1995" name="Mol. Microbiol.">
        <title>Molecular analysis of the ams operon required for exopolysaccharide synthesis of Erwinia amylovora.</title>
        <authorList>
            <person name="Bugert P."/>
            <person name="Geider K."/>
        </authorList>
    </citation>
    <scope>NUCLEOTIDE SEQUENCE [GENOMIC DNA]</scope>
    <source>
        <strain>EA1/79</strain>
    </source>
</reference>
<reference key="2">
    <citation type="submission" date="2011-08" db="EMBL/GenBank/DDBJ databases">
        <authorList>
            <person name="Geider K.K."/>
        </authorList>
    </citation>
    <scope>SEQUENCE REVISION TO 118</scope>
</reference>
<gene>
    <name type="primary">amsD</name>
</gene>
<name>AMSD_ERWAM</name>
<protein>
    <recommendedName>
        <fullName>Amylovoran biosynthesis glycosyltransferase AmsD</fullName>
        <ecNumber>2.4.-.-</ecNumber>
    </recommendedName>
</protein>